<dbReference type="EMBL" id="AE005174">
    <property type="protein sequence ID" value="AAG56100.1"/>
    <property type="molecule type" value="Genomic_DNA"/>
</dbReference>
<dbReference type="EMBL" id="BA000007">
    <property type="protein sequence ID" value="BAB35168.1"/>
    <property type="molecule type" value="Genomic_DNA"/>
</dbReference>
<dbReference type="PIR" id="A99847">
    <property type="entry name" value="A99847"/>
</dbReference>
<dbReference type="PIR" id="H85704">
    <property type="entry name" value="H85704"/>
</dbReference>
<dbReference type="RefSeq" id="NP_309772.1">
    <property type="nucleotide sequence ID" value="NC_002695.1"/>
</dbReference>
<dbReference type="RefSeq" id="WP_000979661.1">
    <property type="nucleotide sequence ID" value="NZ_VOAI01000031.1"/>
</dbReference>
<dbReference type="SMR" id="P0AFH7"/>
<dbReference type="STRING" id="155864.Z2021"/>
<dbReference type="GeneID" id="913106"/>
<dbReference type="GeneID" id="93775310"/>
<dbReference type="KEGG" id="ece:Z2021"/>
<dbReference type="KEGG" id="ecs:ECs_1745"/>
<dbReference type="PATRIC" id="fig|386585.9.peg.1847"/>
<dbReference type="eggNOG" id="COG1173">
    <property type="taxonomic scope" value="Bacteria"/>
</dbReference>
<dbReference type="HOGENOM" id="CLU_028518_1_3_6"/>
<dbReference type="OMA" id="IAWKHLV"/>
<dbReference type="Proteomes" id="UP000000558">
    <property type="component" value="Chromosome"/>
</dbReference>
<dbReference type="Proteomes" id="UP000002519">
    <property type="component" value="Chromosome"/>
</dbReference>
<dbReference type="GO" id="GO:0005886">
    <property type="term" value="C:plasma membrane"/>
    <property type="evidence" value="ECO:0007669"/>
    <property type="project" value="UniProtKB-SubCell"/>
</dbReference>
<dbReference type="GO" id="GO:0015833">
    <property type="term" value="P:peptide transport"/>
    <property type="evidence" value="ECO:0007669"/>
    <property type="project" value="UniProtKB-KW"/>
</dbReference>
<dbReference type="GO" id="GO:0015031">
    <property type="term" value="P:protein transport"/>
    <property type="evidence" value="ECO:0007669"/>
    <property type="project" value="UniProtKB-KW"/>
</dbReference>
<dbReference type="GO" id="GO:0055085">
    <property type="term" value="P:transmembrane transport"/>
    <property type="evidence" value="ECO:0007669"/>
    <property type="project" value="InterPro"/>
</dbReference>
<dbReference type="CDD" id="cd06261">
    <property type="entry name" value="TM_PBP2"/>
    <property type="match status" value="1"/>
</dbReference>
<dbReference type="FunFam" id="1.10.3720.10:FF:000008">
    <property type="entry name" value="Oligopeptide ABC transporter permease OppC"/>
    <property type="match status" value="1"/>
</dbReference>
<dbReference type="Gene3D" id="1.10.3720.10">
    <property type="entry name" value="MetI-like"/>
    <property type="match status" value="1"/>
</dbReference>
<dbReference type="InterPro" id="IPR050366">
    <property type="entry name" value="BP-dependent_transpt_permease"/>
</dbReference>
<dbReference type="InterPro" id="IPR000515">
    <property type="entry name" value="MetI-like"/>
</dbReference>
<dbReference type="InterPro" id="IPR035906">
    <property type="entry name" value="MetI-like_sf"/>
</dbReference>
<dbReference type="InterPro" id="IPR025966">
    <property type="entry name" value="OppC_N"/>
</dbReference>
<dbReference type="NCBIfam" id="NF011935">
    <property type="entry name" value="PRK15406.1"/>
    <property type="match status" value="1"/>
</dbReference>
<dbReference type="PANTHER" id="PTHR43386">
    <property type="entry name" value="OLIGOPEPTIDE TRANSPORT SYSTEM PERMEASE PROTEIN APPC"/>
    <property type="match status" value="1"/>
</dbReference>
<dbReference type="PANTHER" id="PTHR43386:SF2">
    <property type="entry name" value="OLIGOPEPTIDE TRANSPORT SYSTEM PERMEASE PROTEIN OPPC"/>
    <property type="match status" value="1"/>
</dbReference>
<dbReference type="Pfam" id="PF00528">
    <property type="entry name" value="BPD_transp_1"/>
    <property type="match status" value="1"/>
</dbReference>
<dbReference type="Pfam" id="PF12911">
    <property type="entry name" value="OppC_N"/>
    <property type="match status" value="1"/>
</dbReference>
<dbReference type="SUPFAM" id="SSF161098">
    <property type="entry name" value="MetI-like"/>
    <property type="match status" value="1"/>
</dbReference>
<dbReference type="PROSITE" id="PS50928">
    <property type="entry name" value="ABC_TM1"/>
    <property type="match status" value="1"/>
</dbReference>
<keyword id="KW-0997">Cell inner membrane</keyword>
<keyword id="KW-1003">Cell membrane</keyword>
<keyword id="KW-0472">Membrane</keyword>
<keyword id="KW-0571">Peptide transport</keyword>
<keyword id="KW-0653">Protein transport</keyword>
<keyword id="KW-1185">Reference proteome</keyword>
<keyword id="KW-0812">Transmembrane</keyword>
<keyword id="KW-1133">Transmembrane helix</keyword>
<keyword id="KW-0813">Transport</keyword>
<comment type="function">
    <text evidence="1">Part of the ABC transporter complex OppABCDF involved in the uptake of oligopeptides (By similarity). Probably responsible for the translocation of the substrate across the membrane (By similarity).</text>
</comment>
<comment type="subunit">
    <text evidence="1">The complex is composed of two ATP-binding proteins (OppD and OppF), two transmembrane proteins (OppB and OppC) and a solute-binding protein (OppA).</text>
</comment>
<comment type="subcellular location">
    <subcellularLocation>
        <location evidence="1">Cell inner membrane</location>
        <topology evidence="2">Multi-pass membrane protein</topology>
    </subcellularLocation>
</comment>
<comment type="similarity">
    <text evidence="4">Belongs to the binding-protein-dependent transport system permease family. OppBC subfamily.</text>
</comment>
<organism>
    <name type="scientific">Escherichia coli O157:H7</name>
    <dbReference type="NCBI Taxonomy" id="83334"/>
    <lineage>
        <taxon>Bacteria</taxon>
        <taxon>Pseudomonadati</taxon>
        <taxon>Pseudomonadota</taxon>
        <taxon>Gammaproteobacteria</taxon>
        <taxon>Enterobacterales</taxon>
        <taxon>Enterobacteriaceae</taxon>
        <taxon>Escherichia</taxon>
    </lineage>
</organism>
<accession>P0AFH7</accession>
<accession>P77664</accession>
<evidence type="ECO:0000250" key="1">
    <source>
        <dbReference type="UniProtKB" id="P0AFH6"/>
    </source>
</evidence>
<evidence type="ECO:0000255" key="2"/>
<evidence type="ECO:0000255" key="3">
    <source>
        <dbReference type="PROSITE-ProRule" id="PRU00441"/>
    </source>
</evidence>
<evidence type="ECO:0000305" key="4"/>
<proteinExistence type="inferred from homology"/>
<sequence>MMLSKKNSETLENFSEKLEVEGRSLWQDARRRFMHNRAAVASLIVLVLIALFVILAPMLSQFAYDDTDWAMMSSAPDMESGHYFGTDSSGRDLLVRVAIGGRISLMVGVAAALVAVVVGTLYGSLSGYLGGKVDSVMMRLLEILNSFPFMFFVILLVTFFGQNILLIFVAIGMVSWLDMARIVRGQTLSLKRKEFIEAAQVGGVSTSGIVIRHIVPNVLGVVVVYASLLVPSMILFESFLSFLGLGTQEPLSSWGALLSDGANSMEVSPWLLLFPAGFLVVTLFCFNFIGDGLRDALDPKDR</sequence>
<name>OPPC_ECO57</name>
<reference key="1">
    <citation type="journal article" date="2001" name="Nature">
        <title>Genome sequence of enterohaemorrhagic Escherichia coli O157:H7.</title>
        <authorList>
            <person name="Perna N.T."/>
            <person name="Plunkett G. III"/>
            <person name="Burland V."/>
            <person name="Mau B."/>
            <person name="Glasner J.D."/>
            <person name="Rose D.J."/>
            <person name="Mayhew G.F."/>
            <person name="Evans P.S."/>
            <person name="Gregor J."/>
            <person name="Kirkpatrick H.A."/>
            <person name="Posfai G."/>
            <person name="Hackett J."/>
            <person name="Klink S."/>
            <person name="Boutin A."/>
            <person name="Shao Y."/>
            <person name="Miller L."/>
            <person name="Grotbeck E.J."/>
            <person name="Davis N.W."/>
            <person name="Lim A."/>
            <person name="Dimalanta E.T."/>
            <person name="Potamousis K."/>
            <person name="Apodaca J."/>
            <person name="Anantharaman T.S."/>
            <person name="Lin J."/>
            <person name="Yen G."/>
            <person name="Schwartz D.C."/>
            <person name="Welch R.A."/>
            <person name="Blattner F.R."/>
        </authorList>
    </citation>
    <scope>NUCLEOTIDE SEQUENCE [LARGE SCALE GENOMIC DNA]</scope>
    <source>
        <strain>O157:H7 / EDL933 / ATCC 700927 / EHEC</strain>
    </source>
</reference>
<reference key="2">
    <citation type="journal article" date="2001" name="DNA Res.">
        <title>Complete genome sequence of enterohemorrhagic Escherichia coli O157:H7 and genomic comparison with a laboratory strain K-12.</title>
        <authorList>
            <person name="Hayashi T."/>
            <person name="Makino K."/>
            <person name="Ohnishi M."/>
            <person name="Kurokawa K."/>
            <person name="Ishii K."/>
            <person name="Yokoyama K."/>
            <person name="Han C.-G."/>
            <person name="Ohtsubo E."/>
            <person name="Nakayama K."/>
            <person name="Murata T."/>
            <person name="Tanaka M."/>
            <person name="Tobe T."/>
            <person name="Iida T."/>
            <person name="Takami H."/>
            <person name="Honda T."/>
            <person name="Sasakawa C."/>
            <person name="Ogasawara N."/>
            <person name="Yasunaga T."/>
            <person name="Kuhara S."/>
            <person name="Shiba T."/>
            <person name="Hattori M."/>
            <person name="Shinagawa H."/>
        </authorList>
    </citation>
    <scope>NUCLEOTIDE SEQUENCE [LARGE SCALE GENOMIC DNA]</scope>
    <source>
        <strain>O157:H7 / Sakai / RIMD 0509952 / EHEC</strain>
    </source>
</reference>
<feature type="chain" id="PRO_0000060150" description="Oligopeptide transport system permease protein OppC">
    <location>
        <begin position="1"/>
        <end position="302"/>
    </location>
</feature>
<feature type="topological domain" description="Cytoplasmic" evidence="4">
    <location>
        <begin position="1"/>
        <end position="38"/>
    </location>
</feature>
<feature type="transmembrane region" description="Helical" evidence="2">
    <location>
        <begin position="39"/>
        <end position="59"/>
    </location>
</feature>
<feature type="topological domain" description="Periplasmic" evidence="4">
    <location>
        <begin position="60"/>
        <end position="102"/>
    </location>
</feature>
<feature type="transmembrane region" description="Helical" evidence="2">
    <location>
        <begin position="103"/>
        <end position="123"/>
    </location>
</feature>
<feature type="topological domain" description="Cytoplasmic" evidence="4">
    <location>
        <begin position="124"/>
        <end position="137"/>
    </location>
</feature>
<feature type="transmembrane region" description="Helical" evidence="2">
    <location>
        <begin position="138"/>
        <end position="160"/>
    </location>
</feature>
<feature type="topological domain" description="Periplasmic" evidence="4">
    <location>
        <begin position="161"/>
        <end position="163"/>
    </location>
</feature>
<feature type="transmembrane region" description="Helical" evidence="2">
    <location>
        <begin position="164"/>
        <end position="183"/>
    </location>
</feature>
<feature type="topological domain" description="Cytoplasmic" evidence="4">
    <location>
        <begin position="184"/>
        <end position="213"/>
    </location>
</feature>
<feature type="transmembrane region" description="Helical" evidence="2">
    <location>
        <begin position="214"/>
        <end position="234"/>
    </location>
</feature>
<feature type="topological domain" description="Periplasmic" evidence="4">
    <location>
        <begin position="235"/>
        <end position="269"/>
    </location>
</feature>
<feature type="transmembrane region" description="Helical" evidence="2">
    <location>
        <begin position="270"/>
        <end position="290"/>
    </location>
</feature>
<feature type="topological domain" description="Cytoplasmic" evidence="1">
    <location>
        <begin position="291"/>
        <end position="302"/>
    </location>
</feature>
<feature type="domain" description="ABC transmembrane type-1" evidence="3">
    <location>
        <begin position="101"/>
        <end position="290"/>
    </location>
</feature>
<gene>
    <name type="primary">oppC</name>
    <name type="ordered locus">Z2021</name>
    <name type="ordered locus">ECs1745</name>
</gene>
<protein>
    <recommendedName>
        <fullName evidence="4">Oligopeptide transport system permease protein OppC</fullName>
    </recommendedName>
</protein>